<protein>
    <recommendedName>
        <fullName>ATP-dependent zinc metalloprotease FtsH homolog</fullName>
    </recommendedName>
</protein>
<keyword id="KW-0472">Membrane</keyword>
<keyword id="KW-0934">Plastid</keyword>
<keyword id="KW-0812">Transmembrane</keyword>
<keyword id="KW-1133">Transmembrane helix</keyword>
<geneLocation type="non-photosynthetic plastid"/>
<gene>
    <name type="primary">ftsH</name>
</gene>
<dbReference type="EMBL" id="DQ398104">
    <property type="protein sequence ID" value="ABD33966.1"/>
    <property type="molecule type" value="Genomic_DNA"/>
</dbReference>
<dbReference type="RefSeq" id="YP_635917.1">
    <property type="nucleotide sequence ID" value="NC_008100.1"/>
</dbReference>
<dbReference type="SMR" id="Q2EEX7"/>
<dbReference type="GeneID" id="4100435"/>
<dbReference type="GO" id="GO:0009507">
    <property type="term" value="C:chloroplast"/>
    <property type="evidence" value="ECO:0007669"/>
    <property type="project" value="TreeGrafter"/>
</dbReference>
<dbReference type="GO" id="GO:0042170">
    <property type="term" value="C:plastid membrane"/>
    <property type="evidence" value="ECO:0007669"/>
    <property type="project" value="UniProtKB-SubCell"/>
</dbReference>
<dbReference type="GO" id="GO:0005524">
    <property type="term" value="F:ATP binding"/>
    <property type="evidence" value="ECO:0007669"/>
    <property type="project" value="InterPro"/>
</dbReference>
<dbReference type="GO" id="GO:0016887">
    <property type="term" value="F:ATP hydrolysis activity"/>
    <property type="evidence" value="ECO:0007669"/>
    <property type="project" value="InterPro"/>
</dbReference>
<dbReference type="GO" id="GO:0004176">
    <property type="term" value="F:ATP-dependent peptidase activity"/>
    <property type="evidence" value="ECO:0007669"/>
    <property type="project" value="TreeGrafter"/>
</dbReference>
<dbReference type="GO" id="GO:0045037">
    <property type="term" value="P:protein import into chloroplast stroma"/>
    <property type="evidence" value="ECO:0007669"/>
    <property type="project" value="TreeGrafter"/>
</dbReference>
<dbReference type="GO" id="GO:0006508">
    <property type="term" value="P:proteolysis"/>
    <property type="evidence" value="ECO:0007669"/>
    <property type="project" value="TreeGrafter"/>
</dbReference>
<dbReference type="CDD" id="cd19481">
    <property type="entry name" value="RecA-like_protease"/>
    <property type="match status" value="1"/>
</dbReference>
<dbReference type="Gene3D" id="1.10.8.60">
    <property type="match status" value="1"/>
</dbReference>
<dbReference type="Gene3D" id="3.40.50.300">
    <property type="entry name" value="P-loop containing nucleotide triphosphate hydrolases"/>
    <property type="match status" value="1"/>
</dbReference>
<dbReference type="InterPro" id="IPR003593">
    <property type="entry name" value="AAA+_ATPase"/>
</dbReference>
<dbReference type="InterPro" id="IPR003959">
    <property type="entry name" value="ATPase_AAA_core"/>
</dbReference>
<dbReference type="InterPro" id="IPR003960">
    <property type="entry name" value="ATPase_AAA_CS"/>
</dbReference>
<dbReference type="InterPro" id="IPR027417">
    <property type="entry name" value="P-loop_NTPase"/>
</dbReference>
<dbReference type="PANTHER" id="PTHR23076:SF37">
    <property type="entry name" value="ATP-DEPENDENT ZINC METALLOPROTEASE FTSH 4, MITOCHONDRIAL"/>
    <property type="match status" value="1"/>
</dbReference>
<dbReference type="PANTHER" id="PTHR23076">
    <property type="entry name" value="METALLOPROTEASE M41 FTSH"/>
    <property type="match status" value="1"/>
</dbReference>
<dbReference type="Pfam" id="PF00004">
    <property type="entry name" value="AAA"/>
    <property type="match status" value="2"/>
</dbReference>
<dbReference type="SMART" id="SM00382">
    <property type="entry name" value="AAA"/>
    <property type="match status" value="1"/>
</dbReference>
<dbReference type="SUPFAM" id="SSF52540">
    <property type="entry name" value="P-loop containing nucleoside triphosphate hydrolases"/>
    <property type="match status" value="1"/>
</dbReference>
<dbReference type="PROSITE" id="PS00674">
    <property type="entry name" value="AAA"/>
    <property type="match status" value="1"/>
</dbReference>
<name>FTSHL_HELSJ</name>
<comment type="subcellular location">
    <subcellularLocation>
        <location evidence="2">Plastid membrane</location>
        <topology evidence="2">Multi-pass membrane protein</topology>
    </subcellularLocation>
</comment>
<comment type="domain">
    <text>Lacks the zinc protease domain of other FtsH proteins. Also much longer in both the N- and C-termini.</text>
</comment>
<comment type="similarity">
    <text evidence="2">Belongs to the AAA ATPase family.</text>
</comment>
<evidence type="ECO:0000255" key="1"/>
<evidence type="ECO:0000305" key="2"/>
<sequence length="1460" mass="172686">MNTSNLDITKKSSVNQRNKERITYLMIKQKIKLLWNKAQMDAFNSNNYIIIKFFKKYTYFLNLILKDNDINSYRTQLKTSFILNSKLTISLLFILIFVGVEASSILFKEIYNQRAASKYFKKLNIQFNNFQYIGYINHLTYKSVPSFLNKEQRIISELFFPKKYGAFSNKKIWDELNCYKINKFNEYITIDPLWLFSNKKKYNLINKKKLNSLSNKTTKIILYESENEEEVNDKNSKENKSLLMDEKSISSSNNIKVKRFDLLIDSEKKDRQLLKVSFQKDDNFSFINNKIFGYYYQQLNNYLNIKKEIILAIEKLIFYSIKKKKVNLWVKNEAPLEYQGQPLKLINNRSLKASYLINKLTDRSNEKIAVTSKQNKFYFKKSPLEAQRFKNKKKFFIASFWQRFRSFLKETPYYFDYTNRIFSKKKFELLSLNKKKISPKDQTQNQEGYSIYLDKSHDIIPFEQINLNNPLGTKGVIYNIKSNNKKYYNLFNYRSRPFVIHAGIKKYLRRKKKNSYFRRRKINNISSNTLLKLKKSYTQNLKMPVFLNPNQWGFYYSKSLKKNIKNRELISPLVNLPIAHQREYLYNSKYLPFVFTNLENYNVYLPNLNKNLQNKVNSDILLKSYTYLPKSVKNKKKYTSVFFNLLKQKIILPDKLINYYQDGNYLKFYFFVSWFLLIELFSILAFMQIFISIFYILRKSIGEIIIELMHEVSGHLNNVTEDLKSWLPEYFFKEPFEWQFFEASTKSFENFAEKENLKRFFDPYILALQYTKSNLRLPFFNIKLDINILQKPIKSYKKFKSIVLSNNEKEELLIKPILLVGPPGTGKTLLVRAIAGEADIPVIQFIVNKDSPGFTRELVPEYEKLSKAFEYAKSIAPCILFFDEMDSLAPKRGGGYFGENAWAEIRLNNNILPYEFSPLKAPEPQKNKMDKFKTKKVKPRGTLLQLLYECNNLSNEKPILLIGATNRQNEIDPAVIRPGRFSTIYNFSLPNSSERIDFCKFYAAGLSMDKEIPWDYIAKRTVGFSPSDISMLMKESSLYGVLNNTKHTLKSLEHGIDRVLGVSKSYLSTLNISKKNVYNKILHMAYYKVGLTLLPLLFKQEMPAFIKLWPMQERAIVKQNKLEENIHSSEWDTLATLEQKLILRYGGKAAELLFSYLDKDLSDEGFSELSAGQLFITFLVDYYNHYSRSEPLGIIPTLLKKRSSTFWHNYEYNLFEFKNIINGPSNVYKEPLIGFYGIEGAESFYDQKDKAKDILDIKDKHAQSLNSYLWWYQYVPKDIFKIWTTSLKNQKWSRFWLPDPELSFFNLDFVNAEIYVSELIDTLLPTWKFNNQGLRKLNKKTRTVWPQIKFATHEYIVSCLILSSLNKAMEVLDEHREFLDFCVAHLIKEEILREPDILKNLKRFNLEKYHPKNNLEKDQFKDNKKLNILNKYTIVSRSGGLNSRRPFPLWIDVDTITKNN</sequence>
<organism>
    <name type="scientific">Helicosporidium sp. subsp. Simulium jonesii</name>
    <name type="common">Green alga</name>
    <dbReference type="NCBI Taxonomy" id="145475"/>
    <lineage>
        <taxon>Eukaryota</taxon>
        <taxon>Viridiplantae</taxon>
        <taxon>Chlorophyta</taxon>
        <taxon>core chlorophytes</taxon>
        <taxon>Trebouxiophyceae</taxon>
        <taxon>Chlorellales</taxon>
        <taxon>Chlorellaceae</taxon>
        <taxon>Helicosporidium</taxon>
    </lineage>
</organism>
<feature type="chain" id="PRO_0000293973" description="ATP-dependent zinc metalloprotease FtsH homolog">
    <location>
        <begin position="1"/>
        <end position="1460"/>
    </location>
</feature>
<feature type="transmembrane region" description="Helical" evidence="1">
    <location>
        <begin position="87"/>
        <end position="107"/>
    </location>
</feature>
<feature type="transmembrane region" description="Helical" evidence="1">
    <location>
        <begin position="674"/>
        <end position="694"/>
    </location>
</feature>
<reference key="1">
    <citation type="journal article" date="2006" name="BMC Biol.">
        <title>The complete plastid genome sequence of the parasitic green alga, Helicosporidium sp. is highly reduced and structured.</title>
        <authorList>
            <person name="de Koning A.P."/>
            <person name="Keeling P.J."/>
        </authorList>
    </citation>
    <scope>NUCLEOTIDE SEQUENCE [LARGE SCALE GENOMIC DNA]</scope>
</reference>
<proteinExistence type="inferred from homology"/>
<accession>Q2EEX7</accession>